<dbReference type="EC" id="2.3.1.89" evidence="1"/>
<dbReference type="EMBL" id="CP000728">
    <property type="protein sequence ID" value="ABS41230.1"/>
    <property type="molecule type" value="Genomic_DNA"/>
</dbReference>
<dbReference type="RefSeq" id="WP_012100855.1">
    <property type="nucleotide sequence ID" value="NC_009699.1"/>
</dbReference>
<dbReference type="SMR" id="A7GI22"/>
<dbReference type="KEGG" id="cbf:CLI_3220"/>
<dbReference type="HOGENOM" id="CLU_103751_0_0_9"/>
<dbReference type="UniPathway" id="UPA00034">
    <property type="reaction ID" value="UER00022"/>
</dbReference>
<dbReference type="Proteomes" id="UP000002410">
    <property type="component" value="Chromosome"/>
</dbReference>
<dbReference type="GO" id="GO:0047200">
    <property type="term" value="F:tetrahydrodipicolinate N-acetyltransferase activity"/>
    <property type="evidence" value="ECO:0007669"/>
    <property type="project" value="UniProtKB-EC"/>
</dbReference>
<dbReference type="GO" id="GO:0019877">
    <property type="term" value="P:diaminopimelate biosynthetic process"/>
    <property type="evidence" value="ECO:0007669"/>
    <property type="project" value="UniProtKB-UniRule"/>
</dbReference>
<dbReference type="GO" id="GO:0009089">
    <property type="term" value="P:lysine biosynthetic process via diaminopimelate"/>
    <property type="evidence" value="ECO:0007669"/>
    <property type="project" value="UniProtKB-UniRule"/>
</dbReference>
<dbReference type="CDD" id="cd03350">
    <property type="entry name" value="LbH_THP_succinylT"/>
    <property type="match status" value="1"/>
</dbReference>
<dbReference type="Gene3D" id="2.160.10.10">
    <property type="entry name" value="Hexapeptide repeat proteins"/>
    <property type="match status" value="1"/>
</dbReference>
<dbReference type="Gene3D" id="3.30.70.250">
    <property type="entry name" value="Malonyl-CoA ACP transacylase, ACP-binding"/>
    <property type="match status" value="1"/>
</dbReference>
<dbReference type="HAMAP" id="MF_01691">
    <property type="entry name" value="DapH"/>
    <property type="match status" value="1"/>
</dbReference>
<dbReference type="InterPro" id="IPR019873">
    <property type="entry name" value="DapH"/>
</dbReference>
<dbReference type="InterPro" id="IPR013710">
    <property type="entry name" value="DapH_N"/>
</dbReference>
<dbReference type="InterPro" id="IPR001451">
    <property type="entry name" value="Hexapep"/>
</dbReference>
<dbReference type="InterPro" id="IPR018357">
    <property type="entry name" value="Hexapep_transf_CS"/>
</dbReference>
<dbReference type="InterPro" id="IPR050179">
    <property type="entry name" value="Trans_hexapeptide_repeat"/>
</dbReference>
<dbReference type="InterPro" id="IPR011004">
    <property type="entry name" value="Trimer_LpxA-like_sf"/>
</dbReference>
<dbReference type="NCBIfam" id="TIGR03532">
    <property type="entry name" value="DapD_Ac"/>
    <property type="match status" value="1"/>
</dbReference>
<dbReference type="PANTHER" id="PTHR43300:SF10">
    <property type="entry name" value="2,3,4,5-TETRAHYDROPYRIDINE-2,6-DICARBOXYLATE N-ACETYLTRANSFERASE"/>
    <property type="match status" value="1"/>
</dbReference>
<dbReference type="PANTHER" id="PTHR43300">
    <property type="entry name" value="ACETYLTRANSFERASE"/>
    <property type="match status" value="1"/>
</dbReference>
<dbReference type="Pfam" id="PF08503">
    <property type="entry name" value="DapH_N"/>
    <property type="match status" value="1"/>
</dbReference>
<dbReference type="Pfam" id="PF14602">
    <property type="entry name" value="Hexapep_2"/>
    <property type="match status" value="1"/>
</dbReference>
<dbReference type="SUPFAM" id="SSF51161">
    <property type="entry name" value="Trimeric LpxA-like enzymes"/>
    <property type="match status" value="1"/>
</dbReference>
<dbReference type="PROSITE" id="PS00101">
    <property type="entry name" value="HEXAPEP_TRANSFERASES"/>
    <property type="match status" value="1"/>
</dbReference>
<gene>
    <name evidence="1" type="primary">dapH</name>
    <name type="ordered locus">CLI_3220</name>
</gene>
<reference key="1">
    <citation type="submission" date="2007-06" db="EMBL/GenBank/DDBJ databases">
        <authorList>
            <person name="Brinkac L.M."/>
            <person name="Daugherty S."/>
            <person name="Dodson R.J."/>
            <person name="Madupu R."/>
            <person name="Brown J.L."/>
            <person name="Bruce D."/>
            <person name="Detter C."/>
            <person name="Munk C."/>
            <person name="Smith L.A."/>
            <person name="Smith T.J."/>
            <person name="White O."/>
            <person name="Brettin T.S."/>
        </authorList>
    </citation>
    <scope>NUCLEOTIDE SEQUENCE [LARGE SCALE GENOMIC DNA]</scope>
    <source>
        <strain>Langeland / NCTC 10281 / Type F</strain>
    </source>
</reference>
<comment type="function">
    <text evidence="1">Catalyzes the transfer of an acetyl group from acetyl-CoA to tetrahydrodipicolinate.</text>
</comment>
<comment type="catalytic activity">
    <reaction evidence="1">
        <text>(S)-2,3,4,5-tetrahydrodipicolinate + acetyl-CoA + H2O = L-2-acetamido-6-oxoheptanedioate + CoA</text>
        <dbReference type="Rhea" id="RHEA:13085"/>
        <dbReference type="ChEBI" id="CHEBI:15377"/>
        <dbReference type="ChEBI" id="CHEBI:16845"/>
        <dbReference type="ChEBI" id="CHEBI:57287"/>
        <dbReference type="ChEBI" id="CHEBI:57288"/>
        <dbReference type="ChEBI" id="CHEBI:58117"/>
        <dbReference type="EC" id="2.3.1.89"/>
    </reaction>
</comment>
<comment type="pathway">
    <text evidence="1">Amino-acid biosynthesis; L-lysine biosynthesis via DAP pathway; LL-2,6-diaminopimelate from (S)-tetrahydrodipicolinate (acetylase route): step 1/3.</text>
</comment>
<comment type="similarity">
    <text evidence="1">Belongs to the transferase hexapeptide repeat family. DapH subfamily.</text>
</comment>
<feature type="chain" id="PRO_0000376648" description="2,3,4,5-tetrahydropyridine-2,6-dicarboxylate N-acetyltransferase">
    <location>
        <begin position="1"/>
        <end position="236"/>
    </location>
</feature>
<accession>A7GI22</accession>
<evidence type="ECO:0000255" key="1">
    <source>
        <dbReference type="HAMAP-Rule" id="MF_01691"/>
    </source>
</evidence>
<name>DAPH_CLOBL</name>
<organism>
    <name type="scientific">Clostridium botulinum (strain Langeland / NCTC 10281 / Type F)</name>
    <dbReference type="NCBI Taxonomy" id="441772"/>
    <lineage>
        <taxon>Bacteria</taxon>
        <taxon>Bacillati</taxon>
        <taxon>Bacillota</taxon>
        <taxon>Clostridia</taxon>
        <taxon>Eubacteriales</taxon>
        <taxon>Clostridiaceae</taxon>
        <taxon>Clostridium</taxon>
    </lineage>
</organism>
<keyword id="KW-0012">Acyltransferase</keyword>
<keyword id="KW-0028">Amino-acid biosynthesis</keyword>
<keyword id="KW-0220">Diaminopimelate biosynthesis</keyword>
<keyword id="KW-0457">Lysine biosynthesis</keyword>
<keyword id="KW-0677">Repeat</keyword>
<keyword id="KW-0808">Transferase</keyword>
<protein>
    <recommendedName>
        <fullName evidence="1">2,3,4,5-tetrahydropyridine-2,6-dicarboxylate N-acetyltransferase</fullName>
        <ecNumber evidence="1">2.3.1.89</ecNumber>
    </recommendedName>
    <alternativeName>
        <fullName evidence="1">Tetrahydrodipicolinate N-acetyltransferase</fullName>
        <shortName evidence="1">THP acetyltransferase</shortName>
        <shortName evidence="1">Tetrahydropicolinate acetylase</shortName>
    </alternativeName>
</protein>
<sequence>MSYNLTDPYEIARYIKEAKKSTPIKAYIEGDLSNCDFTNIEKFNSGDLYILFGESEEILVIIENNKDKIKNCRIEQDRRKSAIPLLDMLKVNARIEPGAIIRDKVLIGENAVIMMGAVINIGAEIGEGTMVDMNAVVGARGKLGKNVHLGAGAVVAGVLEPPSSDPCTIEDNVLIGANAVILEGIKIGKGSVVAAGSIVTTDVPENVVVAGAPAKIIKEVDVKTKDKTKLLDDLRK</sequence>
<proteinExistence type="inferred from homology"/>